<name>PP2A2_ARATH</name>
<dbReference type="EC" id="3.1.3.16"/>
<dbReference type="EMBL" id="M96733">
    <property type="protein sequence ID" value="AAA32848.1"/>
    <property type="molecule type" value="mRNA"/>
</dbReference>
<dbReference type="EMBL" id="AC007067">
    <property type="protein sequence ID" value="AAD39564.1"/>
    <property type="molecule type" value="Genomic_DNA"/>
</dbReference>
<dbReference type="EMBL" id="CP002684">
    <property type="protein sequence ID" value="AEE28579.1"/>
    <property type="molecule type" value="Genomic_DNA"/>
</dbReference>
<dbReference type="EMBL" id="CP002684">
    <property type="protein sequence ID" value="ANM59883.1"/>
    <property type="molecule type" value="Genomic_DNA"/>
</dbReference>
<dbReference type="EMBL" id="AY059847">
    <property type="protein sequence ID" value="AAL24329.1"/>
    <property type="molecule type" value="mRNA"/>
</dbReference>
<dbReference type="EMBL" id="AY093267">
    <property type="protein sequence ID" value="AAM13266.1"/>
    <property type="molecule type" value="mRNA"/>
</dbReference>
<dbReference type="PIR" id="S31162">
    <property type="entry name" value="S31162"/>
</dbReference>
<dbReference type="SMR" id="Q07098"/>
<dbReference type="BioGRID" id="22823">
    <property type="interactions" value="16"/>
</dbReference>
<dbReference type="FunCoup" id="Q07098">
    <property type="interactions" value="4220"/>
</dbReference>
<dbReference type="IntAct" id="Q07098">
    <property type="interactions" value="2"/>
</dbReference>
<dbReference type="STRING" id="3702.Q07098"/>
<dbReference type="PaxDb" id="3702-AT1G10430.1"/>
<dbReference type="ProteomicsDB" id="248968"/>
<dbReference type="EnsemblPlants" id="AT1G10430.1">
    <property type="protein sequence ID" value="AT1G10430.1"/>
    <property type="gene ID" value="AT1G10430"/>
</dbReference>
<dbReference type="EnsemblPlants" id="AT1G10430.2">
    <property type="protein sequence ID" value="AT1G10430.2"/>
    <property type="gene ID" value="AT1G10430"/>
</dbReference>
<dbReference type="GeneID" id="837583"/>
<dbReference type="Gramene" id="AT1G10430.1">
    <property type="protein sequence ID" value="AT1G10430.1"/>
    <property type="gene ID" value="AT1G10430"/>
</dbReference>
<dbReference type="Gramene" id="AT1G10430.2">
    <property type="protein sequence ID" value="AT1G10430.2"/>
    <property type="gene ID" value="AT1G10430"/>
</dbReference>
<dbReference type="KEGG" id="ath:AT1G10430"/>
<dbReference type="Araport" id="AT1G10430"/>
<dbReference type="TAIR" id="AT1G10430">
    <property type="gene designation" value="PP2A-2"/>
</dbReference>
<dbReference type="eggNOG" id="KOG0371">
    <property type="taxonomic scope" value="Eukaryota"/>
</dbReference>
<dbReference type="HOGENOM" id="CLU_004962_8_1_1"/>
<dbReference type="InParanoid" id="Q07098"/>
<dbReference type="OMA" id="WVELKEC"/>
<dbReference type="OrthoDB" id="1021115at2759"/>
<dbReference type="PhylomeDB" id="Q07098"/>
<dbReference type="PRO" id="PR:Q07098"/>
<dbReference type="Proteomes" id="UP000006548">
    <property type="component" value="Chromosome 1"/>
</dbReference>
<dbReference type="ExpressionAtlas" id="Q07098">
    <property type="expression patterns" value="baseline and differential"/>
</dbReference>
<dbReference type="GO" id="GO:0005737">
    <property type="term" value="C:cytoplasm"/>
    <property type="evidence" value="ECO:0007005"/>
    <property type="project" value="TAIR"/>
</dbReference>
<dbReference type="GO" id="GO:0005829">
    <property type="term" value="C:cytosol"/>
    <property type="evidence" value="ECO:0000314"/>
    <property type="project" value="TAIR"/>
</dbReference>
<dbReference type="GO" id="GO:0005634">
    <property type="term" value="C:nucleus"/>
    <property type="evidence" value="ECO:0000314"/>
    <property type="project" value="TAIR"/>
</dbReference>
<dbReference type="GO" id="GO:0005777">
    <property type="term" value="C:peroxisome"/>
    <property type="evidence" value="ECO:0000314"/>
    <property type="project" value="UniProtKB"/>
</dbReference>
<dbReference type="GO" id="GO:0005886">
    <property type="term" value="C:plasma membrane"/>
    <property type="evidence" value="ECO:0007005"/>
    <property type="project" value="TAIR"/>
</dbReference>
<dbReference type="GO" id="GO:0046872">
    <property type="term" value="F:metal ion binding"/>
    <property type="evidence" value="ECO:0007669"/>
    <property type="project" value="UniProtKB-KW"/>
</dbReference>
<dbReference type="GO" id="GO:0004722">
    <property type="term" value="F:protein serine/threonine phosphatase activity"/>
    <property type="evidence" value="ECO:0007669"/>
    <property type="project" value="UniProtKB-EC"/>
</dbReference>
<dbReference type="GO" id="GO:0009738">
    <property type="term" value="P:abscisic acid-activated signaling pathway"/>
    <property type="evidence" value="ECO:0007669"/>
    <property type="project" value="UniProtKB-KW"/>
</dbReference>
<dbReference type="GO" id="GO:0009903">
    <property type="term" value="P:chloroplast avoidance movement"/>
    <property type="evidence" value="ECO:0000315"/>
    <property type="project" value="TAIR"/>
</dbReference>
<dbReference type="GO" id="GO:0009788">
    <property type="term" value="P:negative regulation of abscisic acid-activated signaling pathway"/>
    <property type="evidence" value="ECO:0000315"/>
    <property type="project" value="UniProtKB"/>
</dbReference>
<dbReference type="GO" id="GO:0032000">
    <property type="term" value="P:positive regulation of fatty acid beta-oxidation"/>
    <property type="evidence" value="ECO:0000315"/>
    <property type="project" value="UniProtKB"/>
</dbReference>
<dbReference type="GO" id="GO:0006470">
    <property type="term" value="P:protein dephosphorylation"/>
    <property type="evidence" value="ECO:0000315"/>
    <property type="project" value="TAIR"/>
</dbReference>
<dbReference type="CDD" id="cd07415">
    <property type="entry name" value="MPP_PP2A_PP4_PP6"/>
    <property type="match status" value="1"/>
</dbReference>
<dbReference type="FunFam" id="3.60.21.10:FF:000003">
    <property type="entry name" value="Serine/threonine-protein phosphatase"/>
    <property type="match status" value="1"/>
</dbReference>
<dbReference type="Gene3D" id="3.60.21.10">
    <property type="match status" value="1"/>
</dbReference>
<dbReference type="InterPro" id="IPR004843">
    <property type="entry name" value="Calcineurin-like_PHP_ApaH"/>
</dbReference>
<dbReference type="InterPro" id="IPR029052">
    <property type="entry name" value="Metallo-depent_PP-like"/>
</dbReference>
<dbReference type="InterPro" id="IPR047129">
    <property type="entry name" value="PPA2-like"/>
</dbReference>
<dbReference type="InterPro" id="IPR006186">
    <property type="entry name" value="Ser/Thr-sp_prot-phosphatase"/>
</dbReference>
<dbReference type="PANTHER" id="PTHR45619">
    <property type="entry name" value="SERINE/THREONINE-PROTEIN PHOSPHATASE PP2A-RELATED"/>
    <property type="match status" value="1"/>
</dbReference>
<dbReference type="Pfam" id="PF00149">
    <property type="entry name" value="Metallophos"/>
    <property type="match status" value="1"/>
</dbReference>
<dbReference type="PRINTS" id="PR00114">
    <property type="entry name" value="STPHPHTASE"/>
</dbReference>
<dbReference type="SMART" id="SM00156">
    <property type="entry name" value="PP2Ac"/>
    <property type="match status" value="1"/>
</dbReference>
<dbReference type="SUPFAM" id="SSF56300">
    <property type="entry name" value="Metallo-dependent phosphatases"/>
    <property type="match status" value="1"/>
</dbReference>
<dbReference type="PROSITE" id="PS00125">
    <property type="entry name" value="SER_THR_PHOSPHATASE"/>
    <property type="match status" value="1"/>
</dbReference>
<proteinExistence type="evidence at protein level"/>
<gene>
    <name evidence="11" type="primary">PP2A2</name>
    <name type="synonym">PP2A1</name>
    <name type="ordered locus">At1g10430</name>
    <name type="ORF">T10O24.4</name>
</gene>
<keyword id="KW-0938">Abscisic acid signaling pathway</keyword>
<keyword id="KW-0963">Cytoplasm</keyword>
<keyword id="KW-0378">Hydrolase</keyword>
<keyword id="KW-0464">Manganese</keyword>
<keyword id="KW-0479">Metal-binding</keyword>
<keyword id="KW-0488">Methylation</keyword>
<keyword id="KW-0539">Nucleus</keyword>
<keyword id="KW-0576">Peroxisome</keyword>
<keyword id="KW-0597">Phosphoprotein</keyword>
<keyword id="KW-0904">Protein phosphatase</keyword>
<keyword id="KW-1185">Reference proteome</keyword>
<comment type="function">
    <text evidence="4 6 8 10">Dephosphorylates and activates the actin-depolymerizing factor ADF1, which, in turn, regulates actin cytoskeleton remodeling and is involved in the blue light photoreceptor PHOT2-mediated chloroplast avoidance movements (PubMed:22642987). Associates with the serine/threonine-protein phosphatase PP2A regulatory subunits A and B' to positively regulates beta-oxidation of fatty acids and protoauxins in peroxisomes by dephosphorylating peroxisomal beta-oxidation-related proteins (PubMed:25489022). Acts as a negative regulator of abscisic acid (ABA) signaling. May regulate ABA-dependent gene expression (PubMed:17617176). Involved in the light-dependent activation of nitrate reductase (PubMed:28656346).</text>
</comment>
<comment type="catalytic activity">
    <reaction>
        <text>O-phospho-L-seryl-[protein] + H2O = L-seryl-[protein] + phosphate</text>
        <dbReference type="Rhea" id="RHEA:20629"/>
        <dbReference type="Rhea" id="RHEA-COMP:9863"/>
        <dbReference type="Rhea" id="RHEA-COMP:11604"/>
        <dbReference type="ChEBI" id="CHEBI:15377"/>
        <dbReference type="ChEBI" id="CHEBI:29999"/>
        <dbReference type="ChEBI" id="CHEBI:43474"/>
        <dbReference type="ChEBI" id="CHEBI:83421"/>
        <dbReference type="EC" id="3.1.3.16"/>
    </reaction>
</comment>
<comment type="catalytic activity">
    <reaction>
        <text>O-phospho-L-threonyl-[protein] + H2O = L-threonyl-[protein] + phosphate</text>
        <dbReference type="Rhea" id="RHEA:47004"/>
        <dbReference type="Rhea" id="RHEA-COMP:11060"/>
        <dbReference type="Rhea" id="RHEA-COMP:11605"/>
        <dbReference type="ChEBI" id="CHEBI:15377"/>
        <dbReference type="ChEBI" id="CHEBI:30013"/>
        <dbReference type="ChEBI" id="CHEBI:43474"/>
        <dbReference type="ChEBI" id="CHEBI:61977"/>
        <dbReference type="EC" id="3.1.3.16"/>
    </reaction>
</comment>
<comment type="cofactor">
    <cofactor evidence="3">
        <name>Mn(2+)</name>
        <dbReference type="ChEBI" id="CHEBI:29035"/>
    </cofactor>
    <text evidence="3">Binds 2 manganese ions per subunit.</text>
</comment>
<comment type="subunit">
    <text evidence="5 7 8 9 13">PP2A consists of a common heterodimeric core enzyme, composed of a 36 kDa catalytic subunit (subunit C) and a 65 kDa constant regulatory subunit (subunit A), that associates with a variety of regulatory subunits such as subunits B (the R2/B/PR55/B55, R3/B''/PR72/PR130/PR59 and R5/B'/B56 families) (Probable). Interacts with B'THETA (PubMed:25489022). Interacts with HDA14 (PubMed:22404109). Interacts with SRK2E/OST1 (PubMed:26175513). Interacts with TAP46.</text>
</comment>
<comment type="subcellular location">
    <subcellularLocation>
        <location evidence="5 8">Cytoplasm</location>
        <location evidence="5 8">Cytosol</location>
    </subcellularLocation>
    <subcellularLocation>
        <location evidence="5">Nucleus</location>
    </subcellularLocation>
    <subcellularLocation>
        <location evidence="8">Peroxisome</location>
    </subcellularLocation>
    <text evidence="8">Interacts with B'THETA in the cytosol and peroxisomal import occurs by a piggybacking transport.</text>
</comment>
<comment type="tissue specificity">
    <text evidence="4">Expressed in root meristem, emerging lateral roots, leaf vasculature, stipules, guard cells, anthers and pollen grains.</text>
</comment>
<comment type="induction">
    <text evidence="4">Induced by abscisic acid (ABA).</text>
</comment>
<comment type="PTM">
    <text evidence="14">Reversibly methyl esterified on Leu-306 by leucine carboxyl methyltransferase 1 (LCMT1) and pectin methylesterase 1 (PME1). Carboxyl methylation influences the affinity of the catalytic subunit for the different regulatory subunits, thereby modulating the PP2A holoenzyme's substrate specificity, enzyme activity and cellular localization.</text>
</comment>
<comment type="PTM">
    <text evidence="2">Phosphorylation of either threonine (by autophosphorylation-activated protein kinase) or tyrosine results in inactivation of the phosphatase. Auto-dephosphorylation has been suggested as a mechanism for reactivation.</text>
</comment>
<comment type="similarity">
    <text evidence="12">Belongs to the PPP phosphatase family. PP-2A subfamily.</text>
</comment>
<protein>
    <recommendedName>
        <fullName>Serine/threonine-protein phosphatase PP2A-2 catalytic subunit</fullName>
        <ecNumber>3.1.3.16</ecNumber>
    </recommendedName>
    <alternativeName>
        <fullName>Protein phosphatase 2A isoform 2</fullName>
    </alternativeName>
</protein>
<organism>
    <name type="scientific">Arabidopsis thaliana</name>
    <name type="common">Mouse-ear cress</name>
    <dbReference type="NCBI Taxonomy" id="3702"/>
    <lineage>
        <taxon>Eukaryota</taxon>
        <taxon>Viridiplantae</taxon>
        <taxon>Streptophyta</taxon>
        <taxon>Embryophyta</taxon>
        <taxon>Tracheophyta</taxon>
        <taxon>Spermatophyta</taxon>
        <taxon>Magnoliopsida</taxon>
        <taxon>eudicotyledons</taxon>
        <taxon>Gunneridae</taxon>
        <taxon>Pentapetalae</taxon>
        <taxon>rosids</taxon>
        <taxon>malvids</taxon>
        <taxon>Brassicales</taxon>
        <taxon>Brassicaceae</taxon>
        <taxon>Camelineae</taxon>
        <taxon>Arabidopsis</taxon>
    </lineage>
</organism>
<reference key="1">
    <citation type="journal article" date="1993" name="Plant Mol. Biol.">
        <title>Protein phosphatases in higher plants: multiplicity of type 2A phosphatases in Arabidopsis thaliana.</title>
        <authorList>
            <person name="Arino J."/>
            <person name="Perez-Callejon E."/>
            <person name="Cunillera N."/>
            <person name="Camps M."/>
            <person name="Posas F."/>
            <person name="Ferrer A."/>
        </authorList>
    </citation>
    <scope>NUCLEOTIDE SEQUENCE [MRNA]</scope>
    <source>
        <strain>cv. Columbia GL1</strain>
    </source>
</reference>
<reference key="2">
    <citation type="journal article" date="2000" name="Nature">
        <title>Sequence and analysis of chromosome 1 of the plant Arabidopsis thaliana.</title>
        <authorList>
            <person name="Theologis A."/>
            <person name="Ecker J.R."/>
            <person name="Palm C.J."/>
            <person name="Federspiel N.A."/>
            <person name="Kaul S."/>
            <person name="White O."/>
            <person name="Alonso J."/>
            <person name="Altafi H."/>
            <person name="Araujo R."/>
            <person name="Bowman C.L."/>
            <person name="Brooks S.Y."/>
            <person name="Buehler E."/>
            <person name="Chan A."/>
            <person name="Chao Q."/>
            <person name="Chen H."/>
            <person name="Cheuk R.F."/>
            <person name="Chin C.W."/>
            <person name="Chung M.K."/>
            <person name="Conn L."/>
            <person name="Conway A.B."/>
            <person name="Conway A.R."/>
            <person name="Creasy T.H."/>
            <person name="Dewar K."/>
            <person name="Dunn P."/>
            <person name="Etgu P."/>
            <person name="Feldblyum T.V."/>
            <person name="Feng J.-D."/>
            <person name="Fong B."/>
            <person name="Fujii C.Y."/>
            <person name="Gill J.E."/>
            <person name="Goldsmith A.D."/>
            <person name="Haas B."/>
            <person name="Hansen N.F."/>
            <person name="Hughes B."/>
            <person name="Huizar L."/>
            <person name="Hunter J.L."/>
            <person name="Jenkins J."/>
            <person name="Johnson-Hopson C."/>
            <person name="Khan S."/>
            <person name="Khaykin E."/>
            <person name="Kim C.J."/>
            <person name="Koo H.L."/>
            <person name="Kremenetskaia I."/>
            <person name="Kurtz D.B."/>
            <person name="Kwan A."/>
            <person name="Lam B."/>
            <person name="Langin-Hooper S."/>
            <person name="Lee A."/>
            <person name="Lee J.M."/>
            <person name="Lenz C.A."/>
            <person name="Li J.H."/>
            <person name="Li Y.-P."/>
            <person name="Lin X."/>
            <person name="Liu S.X."/>
            <person name="Liu Z.A."/>
            <person name="Luros J.S."/>
            <person name="Maiti R."/>
            <person name="Marziali A."/>
            <person name="Militscher J."/>
            <person name="Miranda M."/>
            <person name="Nguyen M."/>
            <person name="Nierman W.C."/>
            <person name="Osborne B.I."/>
            <person name="Pai G."/>
            <person name="Peterson J."/>
            <person name="Pham P.K."/>
            <person name="Rizzo M."/>
            <person name="Rooney T."/>
            <person name="Rowley D."/>
            <person name="Sakano H."/>
            <person name="Salzberg S.L."/>
            <person name="Schwartz J.R."/>
            <person name="Shinn P."/>
            <person name="Southwick A.M."/>
            <person name="Sun H."/>
            <person name="Tallon L.J."/>
            <person name="Tambunga G."/>
            <person name="Toriumi M.J."/>
            <person name="Town C.D."/>
            <person name="Utterback T."/>
            <person name="Van Aken S."/>
            <person name="Vaysberg M."/>
            <person name="Vysotskaia V.S."/>
            <person name="Walker M."/>
            <person name="Wu D."/>
            <person name="Yu G."/>
            <person name="Fraser C.M."/>
            <person name="Venter J.C."/>
            <person name="Davis R.W."/>
        </authorList>
    </citation>
    <scope>NUCLEOTIDE SEQUENCE [LARGE SCALE GENOMIC DNA]</scope>
    <source>
        <strain>cv. Columbia</strain>
    </source>
</reference>
<reference key="3">
    <citation type="journal article" date="2017" name="Plant J.">
        <title>Araport11: a complete reannotation of the Arabidopsis thaliana reference genome.</title>
        <authorList>
            <person name="Cheng C.Y."/>
            <person name="Krishnakumar V."/>
            <person name="Chan A.P."/>
            <person name="Thibaud-Nissen F."/>
            <person name="Schobel S."/>
            <person name="Town C.D."/>
        </authorList>
    </citation>
    <scope>GENOME REANNOTATION</scope>
    <source>
        <strain>cv. Columbia</strain>
    </source>
</reference>
<reference key="4">
    <citation type="journal article" date="2003" name="Science">
        <title>Empirical analysis of transcriptional activity in the Arabidopsis genome.</title>
        <authorList>
            <person name="Yamada K."/>
            <person name="Lim J."/>
            <person name="Dale J.M."/>
            <person name="Chen H."/>
            <person name="Shinn P."/>
            <person name="Palm C.J."/>
            <person name="Southwick A.M."/>
            <person name="Wu H.C."/>
            <person name="Kim C.J."/>
            <person name="Nguyen M."/>
            <person name="Pham P.K."/>
            <person name="Cheuk R.F."/>
            <person name="Karlin-Newmann G."/>
            <person name="Liu S.X."/>
            <person name="Lam B."/>
            <person name="Sakano H."/>
            <person name="Wu T."/>
            <person name="Yu G."/>
            <person name="Miranda M."/>
            <person name="Quach H.L."/>
            <person name="Tripp M."/>
            <person name="Chang C.H."/>
            <person name="Lee J.M."/>
            <person name="Toriumi M.J."/>
            <person name="Chan M.M."/>
            <person name="Tang C.C."/>
            <person name="Onodera C.S."/>
            <person name="Deng J.M."/>
            <person name="Akiyama K."/>
            <person name="Ansari Y."/>
            <person name="Arakawa T."/>
            <person name="Banh J."/>
            <person name="Banno F."/>
            <person name="Bowser L."/>
            <person name="Brooks S.Y."/>
            <person name="Carninci P."/>
            <person name="Chao Q."/>
            <person name="Choy N."/>
            <person name="Enju A."/>
            <person name="Goldsmith A.D."/>
            <person name="Gurjal M."/>
            <person name="Hansen N.F."/>
            <person name="Hayashizaki Y."/>
            <person name="Johnson-Hopson C."/>
            <person name="Hsuan V.W."/>
            <person name="Iida K."/>
            <person name="Karnes M."/>
            <person name="Khan S."/>
            <person name="Koesema E."/>
            <person name="Ishida J."/>
            <person name="Jiang P.X."/>
            <person name="Jones T."/>
            <person name="Kawai J."/>
            <person name="Kamiya A."/>
            <person name="Meyers C."/>
            <person name="Nakajima M."/>
            <person name="Narusaka M."/>
            <person name="Seki M."/>
            <person name="Sakurai T."/>
            <person name="Satou M."/>
            <person name="Tamse R."/>
            <person name="Vaysberg M."/>
            <person name="Wallender E.K."/>
            <person name="Wong C."/>
            <person name="Yamamura Y."/>
            <person name="Yuan S."/>
            <person name="Shinozaki K."/>
            <person name="Davis R.W."/>
            <person name="Theologis A."/>
            <person name="Ecker J.R."/>
        </authorList>
    </citation>
    <scope>NUCLEOTIDE SEQUENCE [LARGE SCALE MRNA]</scope>
    <source>
        <strain>cv. Columbia</strain>
    </source>
</reference>
<reference key="5">
    <citation type="journal article" date="1999" name="Eur. J. Biochem.">
        <title>Molecular characterization of the B' regulatory subunit gene family of Arabidopsis protein phosphatase 2A.</title>
        <authorList>
            <person name="Haynes J.G."/>
            <person name="Hartung A.J."/>
            <person name="Hendershot J.D. III"/>
            <person name="Passingham R.S."/>
            <person name="Rundle S.J."/>
        </authorList>
    </citation>
    <scope>INTERACTION WITH PP2AA1</scope>
</reference>
<reference key="6">
    <citation type="journal article" date="2007" name="Plant J.">
        <title>A protein phosphatase 2A catalytic subunit is a negative regulator of abscisic acid signalling.</title>
        <authorList>
            <person name="Pernas M."/>
            <person name="Garcia-Casado G."/>
            <person name="Rojo E."/>
            <person name="Solano R."/>
            <person name="Sanchez-Serrano J.J."/>
        </authorList>
    </citation>
    <scope>FUNCTION</scope>
    <scope>TISSUE SPECIFICITY</scope>
    <scope>INDUCTION BY ABSCISIC ACID</scope>
</reference>
<reference key="7">
    <citation type="journal article" date="2007" name="Trends Plant Sci.">
        <title>Arabidopsis PPP family of serine/threonine phosphatases.</title>
        <authorList>
            <person name="Farkas I."/>
            <person name="Dombradi V."/>
            <person name="Miskei M."/>
            <person name="Szabados L."/>
            <person name="Koncz C."/>
        </authorList>
    </citation>
    <scope>GENE FAMILY</scope>
    <scope>NOMENCLATURE</scope>
</reference>
<reference key="8">
    <citation type="journal article" date="2012" name="Plant Cell Physiol.">
        <title>A protein phosphatase 2A catalytic subunit modulates blue light-induced chloroplast avoidance movements through regulating actin cytoskeleton in Arabidopsis.</title>
        <authorList>
            <person name="Wen F."/>
            <person name="Wang J."/>
            <person name="Xing D."/>
        </authorList>
    </citation>
    <scope>FUNCTION</scope>
</reference>
<reference key="9">
    <citation type="journal article" date="2012" name="Plant J.">
        <title>Arabidopsis thaliana histone deacetylase 14 (HDA14) is an alpha-tubulin deacetylase that associates with PP2A and enriches in the microtubule fraction with the putative histone acetyltransferase ELP3.</title>
        <authorList>
            <person name="Tran H.T."/>
            <person name="Nimick M."/>
            <person name="Uhrig R.G."/>
            <person name="Templeton G."/>
            <person name="Morrice N."/>
            <person name="Gourlay R."/>
            <person name="DeLong A."/>
            <person name="Moorhead G.B."/>
        </authorList>
    </citation>
    <scope>INTERACTION WITH HDA14</scope>
    <scope>SUBCELLULAR LOCATION</scope>
</reference>
<reference key="10">
    <citation type="journal article" date="2014" name="Plant Physiol.">
        <title>TAP46 plays a positive role in the ABSCISIC ACID INSENSITIVE5-regulated gene expression in Arabidopsis.</title>
        <authorList>
            <person name="Hu R."/>
            <person name="Zhu Y."/>
            <person name="Shen G."/>
            <person name="Zhang H."/>
        </authorList>
    </citation>
    <scope>INTERACTION WITH TAP46</scope>
</reference>
<reference key="11">
    <citation type="journal article" date="2015" name="Plant Physiol.">
        <title>Protein phosphatase 2A holoenzyme is targeted to peroxisomes by piggybacking and positively affects peroxisomal beta-oxidation.</title>
        <authorList>
            <person name="Kataya A.R."/>
            <person name="Heidari B."/>
            <person name="Hagen L."/>
            <person name="Kommedal R."/>
            <person name="Slupphaug G."/>
            <person name="Lillo C."/>
        </authorList>
    </citation>
    <scope>FUNCTION</scope>
    <scope>INTERACTION WITH B'THETA</scope>
    <scope>SUBCELLULAR LOCATION</scope>
</reference>
<reference key="12">
    <citation type="journal article" date="2015" name="Plant Physiol.">
        <title>Identification of Open Stomata1-interacting proteins reveals interactions with sucrose non-fermenting1-related protein kinases2 and with type 2a protein phosphatases that function in abscisic acid responses.</title>
        <authorList>
            <person name="Waadt R."/>
            <person name="Manalansan B."/>
            <person name="Rauniyar N."/>
            <person name="Munemasa S."/>
            <person name="Booker M.A."/>
            <person name="Brandt B."/>
            <person name="Waadt C."/>
            <person name="Nusinow D.A."/>
            <person name="Kay S.A."/>
            <person name="Kunz H.H."/>
            <person name="Schumacher K."/>
            <person name="DeLong A."/>
            <person name="Yates J.R. III"/>
            <person name="Schroeder J.I."/>
        </authorList>
    </citation>
    <scope>IDENTIFICATION BY MASS SPECTROMETRY</scope>
    <scope>INTERACTION WITH SRK2E/OST1</scope>
</reference>
<reference key="13">
    <citation type="journal article" date="2017" name="Planta">
        <title>Light regulation of nitrate reductase by catalytic subunits of protein phosphatase 2A.</title>
        <authorList>
            <person name="Creighton M.T."/>
            <person name="Sanmartin M."/>
            <person name="Kataya A.R.A."/>
            <person name="Averkina I.O."/>
            <person name="Heidari B."/>
            <person name="Nemie-Feyissa D."/>
            <person name="Sanchez-Serrano J.J."/>
            <person name="Lillo C."/>
        </authorList>
    </citation>
    <scope>FUNCTION</scope>
</reference>
<reference key="14">
    <citation type="journal article" date="2017" name="Plant Cell Environ.">
        <title>Methylation of protein phosphatase 2A-influence of regulators and environmental stress factors.</title>
        <authorList>
            <person name="Creighton M.T."/>
            <person name="Kolton A."/>
            <person name="Kataya A.R.A."/>
            <person name="Maple-Groedem J."/>
            <person name="Averkina I.O."/>
            <person name="Heidari B."/>
            <person name="Lillo C."/>
        </authorList>
    </citation>
    <scope>METHYLATION AT LEU-306</scope>
</reference>
<sequence length="306" mass="34934">MPSNGDLDRQIEQLMECKPLSEADVRTLCDQARAILVEEYNVQPVKCPVTVCGDIHGQFYDLIELFRIGGNAPDTNYLFMGDYVDRGYYSVETVSLLVALKVRYRDRLTILRGNHESRQITQVYGFYDECLRKYGNANVWKYFTDLFDYLPLTALIESQVFCLHGGLSPSLDTLDNIRSLDRIQEVPHEGPMCDLLWSDPDDRCGWGISPRGAGYTFGQDIAAQFNHNNGLSLISRAHQLVMEGFNWCQDKNVVTVFSAPNYCYRCGNMAAILEIGENMEQNFLQFDPAPRQVEPDTTRKTPDYFL</sequence>
<feature type="chain" id="PRO_0000058852" description="Serine/threonine-protein phosphatase PP2A-2 catalytic subunit">
    <location>
        <begin position="1"/>
        <end position="306"/>
    </location>
</feature>
<feature type="active site" description="Proton donor" evidence="1">
    <location>
        <position position="115"/>
    </location>
</feature>
<feature type="binding site" evidence="3">
    <location>
        <position position="54"/>
    </location>
    <ligand>
        <name>Mn(2+)</name>
        <dbReference type="ChEBI" id="CHEBI:29035"/>
        <label>1</label>
    </ligand>
</feature>
<feature type="binding site" evidence="3">
    <location>
        <position position="56"/>
    </location>
    <ligand>
        <name>Mn(2+)</name>
        <dbReference type="ChEBI" id="CHEBI:29035"/>
        <label>1</label>
    </ligand>
</feature>
<feature type="binding site" evidence="3">
    <location>
        <position position="82"/>
    </location>
    <ligand>
        <name>Mn(2+)</name>
        <dbReference type="ChEBI" id="CHEBI:29035"/>
        <label>1</label>
    </ligand>
</feature>
<feature type="binding site" evidence="3">
    <location>
        <position position="82"/>
    </location>
    <ligand>
        <name>Mn(2+)</name>
        <dbReference type="ChEBI" id="CHEBI:29035"/>
        <label>2</label>
    </ligand>
</feature>
<feature type="binding site" evidence="3">
    <location>
        <position position="114"/>
    </location>
    <ligand>
        <name>Mn(2+)</name>
        <dbReference type="ChEBI" id="CHEBI:29035"/>
        <label>2</label>
    </ligand>
</feature>
<feature type="binding site" evidence="3">
    <location>
        <position position="164"/>
    </location>
    <ligand>
        <name>Mn(2+)</name>
        <dbReference type="ChEBI" id="CHEBI:29035"/>
        <label>2</label>
    </ligand>
</feature>
<feature type="binding site" evidence="3">
    <location>
        <position position="238"/>
    </location>
    <ligand>
        <name>Mn(2+)</name>
        <dbReference type="ChEBI" id="CHEBI:29035"/>
        <label>2</label>
    </ligand>
</feature>
<feature type="modified residue" description="Leucine methyl ester" evidence="14">
    <location>
        <position position="306"/>
    </location>
</feature>
<evidence type="ECO:0000250" key="1"/>
<evidence type="ECO:0000250" key="2">
    <source>
        <dbReference type="UniProtKB" id="P67774"/>
    </source>
</evidence>
<evidence type="ECO:0000250" key="3">
    <source>
        <dbReference type="UniProtKB" id="P67775"/>
    </source>
</evidence>
<evidence type="ECO:0000269" key="4">
    <source>
    </source>
</evidence>
<evidence type="ECO:0000269" key="5">
    <source>
    </source>
</evidence>
<evidence type="ECO:0000269" key="6">
    <source>
    </source>
</evidence>
<evidence type="ECO:0000269" key="7">
    <source>
    </source>
</evidence>
<evidence type="ECO:0000269" key="8">
    <source>
    </source>
</evidence>
<evidence type="ECO:0000269" key="9">
    <source>
    </source>
</evidence>
<evidence type="ECO:0000269" key="10">
    <source>
    </source>
</evidence>
<evidence type="ECO:0000303" key="11">
    <source>
    </source>
</evidence>
<evidence type="ECO:0000305" key="12"/>
<evidence type="ECO:0000305" key="13">
    <source>
    </source>
</evidence>
<evidence type="ECO:0000305" key="14">
    <source>
    </source>
</evidence>
<accession>Q07098</accession>